<organism>
    <name type="scientific">Human cytomegalovirus (strain Towne)</name>
    <name type="common">HHV-5</name>
    <name type="synonym">Human herpesvirus 5</name>
    <dbReference type="NCBI Taxonomy" id="10363"/>
    <lineage>
        <taxon>Viruses</taxon>
        <taxon>Duplodnaviria</taxon>
        <taxon>Heunggongvirae</taxon>
        <taxon>Peploviricota</taxon>
        <taxon>Herviviricetes</taxon>
        <taxon>Herpesvirales</taxon>
        <taxon>Orthoherpesviridae</taxon>
        <taxon>Betaherpesvirinae</taxon>
        <taxon>Cytomegalovirus</taxon>
        <taxon>Cytomegalovirus humanbeta5</taxon>
        <taxon>Human cytomegalovirus</taxon>
    </lineage>
</organism>
<comment type="function">
    <text evidence="2">Serine/threonine protein kinase that plays important roles in several processes including nuclear viral egress, viral replication or regulation of host cell cycle progression. Participates in the acquisition of tegument during virion morphogenesis in the nucleus. Redistributes the host nuclear lamina by phosphorylating cellular Lamins-A/C. Plays a role in viral DNA synthesis by phosphorylating the DNA polymerase processivity factor UL44. Stimulates host cell cycle to support viral DNA synthesis by phosphorylating host retinoblastoma/RB1 protein. Additional substrates have been identified including host EF1D or H2B. Also phosphorylates host SAMHD1 and thereby counteracts its antiviral effect by reducing its dNTP hydrolase activity.</text>
</comment>
<comment type="catalytic activity">
    <reaction evidence="2">
        <text>L-seryl-[protein] + ATP = O-phospho-L-seryl-[protein] + ADP + H(+)</text>
        <dbReference type="Rhea" id="RHEA:17989"/>
        <dbReference type="Rhea" id="RHEA-COMP:9863"/>
        <dbReference type="Rhea" id="RHEA-COMP:11604"/>
        <dbReference type="ChEBI" id="CHEBI:15378"/>
        <dbReference type="ChEBI" id="CHEBI:29999"/>
        <dbReference type="ChEBI" id="CHEBI:30616"/>
        <dbReference type="ChEBI" id="CHEBI:83421"/>
        <dbReference type="ChEBI" id="CHEBI:456216"/>
        <dbReference type="EC" id="2.7.11.1"/>
    </reaction>
</comment>
<comment type="catalytic activity">
    <reaction evidence="2">
        <text>L-threonyl-[protein] + ATP = O-phospho-L-threonyl-[protein] + ADP + H(+)</text>
        <dbReference type="Rhea" id="RHEA:46608"/>
        <dbReference type="Rhea" id="RHEA-COMP:11060"/>
        <dbReference type="Rhea" id="RHEA-COMP:11605"/>
        <dbReference type="ChEBI" id="CHEBI:15378"/>
        <dbReference type="ChEBI" id="CHEBI:30013"/>
        <dbReference type="ChEBI" id="CHEBI:30616"/>
        <dbReference type="ChEBI" id="CHEBI:61977"/>
        <dbReference type="ChEBI" id="CHEBI:456216"/>
        <dbReference type="EC" id="2.7.11.1"/>
    </reaction>
</comment>
<comment type="subunit">
    <text evidence="1">Interacts with UL83.</text>
</comment>
<comment type="subcellular location">
    <subcellularLocation>
        <location evidence="1">Virion</location>
    </subcellularLocation>
</comment>
<comment type="PTM">
    <text evidence="1">Autophosphorylates on serine and threonine residues.</text>
</comment>
<comment type="miscellaneous">
    <text>Phosphorylates and thereby activates the antiviral nucleoside analog ganciclovir used to treat CMV infections. Phosphorylation transform the drug to a toxic form, that leads to successful suppression of the infection, while the uninfected cell does not have this ability because it lacks the viral kinase. Mutations in phosphotransferase may induce CMV resistance to antiviral therapies in immunocompromised patients.</text>
</comment>
<comment type="similarity">
    <text evidence="5">Belongs to the protein kinase superfamily. Tyr protein kinase family. HCMV ganciclovir subfamily.</text>
</comment>
<sequence length="707" mass="78248">MSSALRSRARSASLGTTTEGWDPPPLRRPSRARRRQWMREAAQAAAQAAVQAAQAAAAQVAQAHVDEDEVVDLMADEAGGGVTTLTTLSSVSTTTVLGHATFSACVRNDVMRDGEKEDAASDKENLRRPVVPSTSSRGSAASGDGYHGLRCRETSAMWSFEYDRDGDVTSVRRALFTGGSDPSDSVSGVRGGRKRPLRPPLVSLARTPLCRRRVGGVDAVLEENDVELRAESQDSAVASGPGRVPQPLSGSSGEESATAVEADSTSHDDVHCTCSNDQIITTSIRGLTCDPRMFLRLTHPELCELSISYLLVYVPKEDDFCHKICYAVDMSDESYRLGQGSFGEVWPLDRYRVVKVARKHSETVLTVWMSGLIRTRAAGEQQQPPSLVGTGVHRGLLTATGCCLLHNVTVHRRFHTDMFHHDQWKLACIDSYRRAFCTLADAIKFLNHQCRVCHFDITPMNVLIDVNPHNPSEIVRAALCDYSLSEPYPDYNERCVAVFQETGTARRIPNCSHRLRECYHPAFRPMPLQKLLICDPHARFPVAGLRRYCMSELSALGNVLGFCLMRLLDRRGLDEVRMGTEALLFKHAGAACRALENGKLTHCSDACLLILAAQMSYGACLLGEHGAALVSHTLRFVEAKMSSCRVRAFRRFYHECSQTMLHEYVRKNVERLLATSDGLYLYNAFRRTTSIICEEDLDGDCRQLFPE</sequence>
<proteinExistence type="inferred from homology"/>
<keyword id="KW-0067">ATP-binding</keyword>
<keyword id="KW-0945">Host-virus interaction</keyword>
<keyword id="KW-0418">Kinase</keyword>
<keyword id="KW-1121">Modulation of host cell cycle by virus</keyword>
<keyword id="KW-0547">Nucleotide-binding</keyword>
<keyword id="KW-0808">Transferase</keyword>
<keyword id="KW-0946">Virion</keyword>
<protein>
    <recommendedName>
        <fullName>Serine/threonine protein kinase UL97</fullName>
        <ecNumber evidence="2">2.7.11.1</ecNumber>
    </recommendedName>
    <alternativeName>
        <fullName>Ganciclovir kinase</fullName>
    </alternativeName>
</protein>
<feature type="chain" id="PRO_0000088193" description="Serine/threonine protein kinase UL97">
    <location>
        <begin position="1"/>
        <end position="707"/>
    </location>
</feature>
<feature type="region of interest" description="Disordered" evidence="4">
    <location>
        <begin position="1"/>
        <end position="32"/>
    </location>
</feature>
<feature type="region of interest" description="Disordered" evidence="4">
    <location>
        <begin position="115"/>
        <end position="146"/>
    </location>
</feature>
<feature type="region of interest" description="Disordered" evidence="4">
    <location>
        <begin position="176"/>
        <end position="199"/>
    </location>
</feature>
<feature type="region of interest" description="Disordered" evidence="4">
    <location>
        <begin position="231"/>
        <end position="264"/>
    </location>
</feature>
<feature type="compositionally biased region" description="Low complexity" evidence="4">
    <location>
        <begin position="1"/>
        <end position="14"/>
    </location>
</feature>
<feature type="compositionally biased region" description="Basic and acidic residues" evidence="4">
    <location>
        <begin position="115"/>
        <end position="127"/>
    </location>
</feature>
<feature type="compositionally biased region" description="Low complexity" evidence="4">
    <location>
        <begin position="178"/>
        <end position="188"/>
    </location>
</feature>
<feature type="active site" description="Proton acceptor" evidence="3">
    <location>
        <position position="456"/>
    </location>
</feature>
<feature type="binding site" evidence="1">
    <location>
        <begin position="337"/>
        <end position="345"/>
    </location>
    <ligand>
        <name>ATP</name>
        <dbReference type="ChEBI" id="CHEBI:30616"/>
    </ligand>
</feature>
<feature type="binding site" evidence="1">
    <location>
        <position position="359"/>
    </location>
    <ligand>
        <name>ATP</name>
        <dbReference type="ChEBI" id="CHEBI:30616"/>
    </ligand>
</feature>
<name>UL97_HCMVT</name>
<evidence type="ECO:0000250" key="1"/>
<evidence type="ECO:0000250" key="2">
    <source>
        <dbReference type="UniProtKB" id="P16788"/>
    </source>
</evidence>
<evidence type="ECO:0000255" key="3">
    <source>
        <dbReference type="PROSITE-ProRule" id="PRU10028"/>
    </source>
</evidence>
<evidence type="ECO:0000256" key="4">
    <source>
        <dbReference type="SAM" id="MobiDB-lite"/>
    </source>
</evidence>
<evidence type="ECO:0000305" key="5"/>
<reference key="1">
    <citation type="journal article" date="2001" name="Antimicrob. Agents Chemother.">
        <title>Sequencing of cytomegalovirus UL97 gene for genotypic antiviral resistance testing.</title>
        <authorList>
            <person name="Lurain N.S."/>
            <person name="Weinberg A."/>
            <person name="Crumpacker C.S."/>
            <person name="Chou S."/>
        </authorList>
    </citation>
    <scope>NUCLEOTIDE SEQUENCE [GENOMIC DNA]</scope>
</reference>
<gene>
    <name type="primary">UL97</name>
</gene>
<organismHost>
    <name type="scientific">Homo sapiens</name>
    <name type="common">Human</name>
    <dbReference type="NCBI Taxonomy" id="9606"/>
</organismHost>
<accession>Q68101</accession>
<dbReference type="EC" id="2.7.11.1" evidence="2"/>
<dbReference type="EMBL" id="U07355">
    <property type="protein sequence ID" value="AAA16789.1"/>
    <property type="molecule type" value="Unassigned_DNA"/>
</dbReference>
<dbReference type="GO" id="GO:0044423">
    <property type="term" value="C:virion component"/>
    <property type="evidence" value="ECO:0007669"/>
    <property type="project" value="UniProtKB-KW"/>
</dbReference>
<dbReference type="GO" id="GO:0005524">
    <property type="term" value="F:ATP binding"/>
    <property type="evidence" value="ECO:0007669"/>
    <property type="project" value="UniProtKB-KW"/>
</dbReference>
<dbReference type="GO" id="GO:0106310">
    <property type="term" value="F:protein serine kinase activity"/>
    <property type="evidence" value="ECO:0007669"/>
    <property type="project" value="RHEA"/>
</dbReference>
<dbReference type="GO" id="GO:0004674">
    <property type="term" value="F:protein serine/threonine kinase activity"/>
    <property type="evidence" value="ECO:0007669"/>
    <property type="project" value="UniProtKB-EC"/>
</dbReference>
<dbReference type="GO" id="GO:0044071">
    <property type="term" value="P:symbiont-mediated perturbation of host cell cycle progression"/>
    <property type="evidence" value="ECO:0007669"/>
    <property type="project" value="UniProtKB-KW"/>
</dbReference>
<dbReference type="GO" id="GO:0016032">
    <property type="term" value="P:viral process"/>
    <property type="evidence" value="ECO:0007669"/>
    <property type="project" value="InterPro"/>
</dbReference>
<dbReference type="Gene3D" id="1.10.510.10">
    <property type="entry name" value="Transferase(Phosphotransferase) domain 1"/>
    <property type="match status" value="1"/>
</dbReference>
<dbReference type="InterPro" id="IPR010615">
    <property type="entry name" value="Herpes_UL97"/>
</dbReference>
<dbReference type="InterPro" id="IPR011009">
    <property type="entry name" value="Kinase-like_dom_sf"/>
</dbReference>
<dbReference type="InterPro" id="IPR008266">
    <property type="entry name" value="Tyr_kinase_AS"/>
</dbReference>
<dbReference type="Pfam" id="PF06734">
    <property type="entry name" value="UL97"/>
    <property type="match status" value="1"/>
</dbReference>
<dbReference type="SUPFAM" id="SSF56112">
    <property type="entry name" value="Protein kinase-like (PK-like)"/>
    <property type="match status" value="1"/>
</dbReference>
<dbReference type="PROSITE" id="PS00107">
    <property type="entry name" value="PROTEIN_KINASE_ATP"/>
    <property type="match status" value="1"/>
</dbReference>
<dbReference type="PROSITE" id="PS00109">
    <property type="entry name" value="PROTEIN_KINASE_TYR"/>
    <property type="match status" value="1"/>
</dbReference>